<organism>
    <name type="scientific">Streptomyces coelicolor (strain ATCC BAA-471 / A3(2) / M145)</name>
    <dbReference type="NCBI Taxonomy" id="100226"/>
    <lineage>
        <taxon>Bacteria</taxon>
        <taxon>Bacillati</taxon>
        <taxon>Actinomycetota</taxon>
        <taxon>Actinomycetes</taxon>
        <taxon>Kitasatosporales</taxon>
        <taxon>Streptomycetaceae</taxon>
        <taxon>Streptomyces</taxon>
        <taxon>Streptomyces albidoflavus group</taxon>
    </lineage>
</organism>
<dbReference type="EMBL" id="M29790">
    <property type="protein sequence ID" value="AAA88556.1"/>
    <property type="molecule type" value="Genomic_DNA"/>
</dbReference>
<dbReference type="EMBL" id="AL939125">
    <property type="protein sequence ID" value="CAA16486.1"/>
    <property type="molecule type" value="Genomic_DNA"/>
</dbReference>
<dbReference type="PIR" id="T34829">
    <property type="entry name" value="T34829"/>
</dbReference>
<dbReference type="RefSeq" id="NP_629999.1">
    <property type="nucleotide sequence ID" value="NC_003888.3"/>
</dbReference>
<dbReference type="SMR" id="P16922"/>
<dbReference type="STRING" id="100226.gene:17763537"/>
<dbReference type="PaxDb" id="100226-SCO5877"/>
<dbReference type="KEGG" id="sco:SCO5877"/>
<dbReference type="PATRIC" id="fig|100226.15.peg.5976"/>
<dbReference type="eggNOG" id="COG3629">
    <property type="taxonomic scope" value="Bacteria"/>
</dbReference>
<dbReference type="HOGENOM" id="CLU_004665_0_1_11"/>
<dbReference type="InParanoid" id="P16922"/>
<dbReference type="OrthoDB" id="4336084at2"/>
<dbReference type="PhylomeDB" id="P16922"/>
<dbReference type="Proteomes" id="UP000001973">
    <property type="component" value="Chromosome"/>
</dbReference>
<dbReference type="GO" id="GO:0003677">
    <property type="term" value="F:DNA binding"/>
    <property type="evidence" value="ECO:0000318"/>
    <property type="project" value="GO_Central"/>
</dbReference>
<dbReference type="GO" id="GO:0017000">
    <property type="term" value="P:antibiotic biosynthetic process"/>
    <property type="evidence" value="ECO:0000314"/>
    <property type="project" value="CACAO"/>
</dbReference>
<dbReference type="GO" id="GO:0000160">
    <property type="term" value="P:phosphorelay signal transduction system"/>
    <property type="evidence" value="ECO:0007669"/>
    <property type="project" value="UniProtKB-KW"/>
</dbReference>
<dbReference type="GO" id="GO:0006355">
    <property type="term" value="P:regulation of DNA-templated transcription"/>
    <property type="evidence" value="ECO:0000318"/>
    <property type="project" value="GO_Central"/>
</dbReference>
<dbReference type="CDD" id="cd15831">
    <property type="entry name" value="BTAD"/>
    <property type="match status" value="1"/>
</dbReference>
<dbReference type="FunFam" id="1.25.40.10:FF:000222">
    <property type="entry name" value="SARP family transcriptional regulator"/>
    <property type="match status" value="1"/>
</dbReference>
<dbReference type="Gene3D" id="1.25.40.10">
    <property type="entry name" value="Tetratricopeptide repeat domain"/>
    <property type="match status" value="1"/>
</dbReference>
<dbReference type="Gene3D" id="1.10.10.10">
    <property type="entry name" value="Winged helix-like DNA-binding domain superfamily/Winged helix DNA-binding domain"/>
    <property type="match status" value="1"/>
</dbReference>
<dbReference type="InterPro" id="IPR051677">
    <property type="entry name" value="AfsR-DnrI-RedD_regulator"/>
</dbReference>
<dbReference type="InterPro" id="IPR005158">
    <property type="entry name" value="BTAD"/>
</dbReference>
<dbReference type="InterPro" id="IPR001867">
    <property type="entry name" value="OmpR/PhoB-type_DNA-bd"/>
</dbReference>
<dbReference type="InterPro" id="IPR016032">
    <property type="entry name" value="Sig_transdc_resp-reg_C-effctor"/>
</dbReference>
<dbReference type="InterPro" id="IPR011990">
    <property type="entry name" value="TPR-like_helical_dom_sf"/>
</dbReference>
<dbReference type="InterPro" id="IPR036388">
    <property type="entry name" value="WH-like_DNA-bd_sf"/>
</dbReference>
<dbReference type="PANTHER" id="PTHR35807:SF1">
    <property type="entry name" value="TRANSCRIPTIONAL REGULATOR REDD"/>
    <property type="match status" value="1"/>
</dbReference>
<dbReference type="PANTHER" id="PTHR35807">
    <property type="entry name" value="TRANSCRIPTIONAL REGULATOR REDD-RELATED"/>
    <property type="match status" value="1"/>
</dbReference>
<dbReference type="Pfam" id="PF03704">
    <property type="entry name" value="BTAD"/>
    <property type="match status" value="1"/>
</dbReference>
<dbReference type="SMART" id="SM01043">
    <property type="entry name" value="BTAD"/>
    <property type="match status" value="1"/>
</dbReference>
<dbReference type="SUPFAM" id="SSF46894">
    <property type="entry name" value="C-terminal effector domain of the bipartite response regulators"/>
    <property type="match status" value="1"/>
</dbReference>
<dbReference type="SUPFAM" id="SSF48452">
    <property type="entry name" value="TPR-like"/>
    <property type="match status" value="1"/>
</dbReference>
<dbReference type="PROSITE" id="PS51755">
    <property type="entry name" value="OMPR_PHOB"/>
    <property type="match status" value="1"/>
</dbReference>
<comment type="function">
    <text>The RedD protein is probably one of several delicately balanced regulatory factors that contribute to the control of the biosynthesis of the antibiotic undecylprodigiosin (Red) in S.coelicolor.</text>
</comment>
<comment type="similarity">
    <text evidence="2">Belongs to the AfsR/DnrI/RedD regulatory family.</text>
</comment>
<accession>P16922</accession>
<feature type="chain" id="PRO_0000110007" description="Transcriptional regulator RedD">
    <location>
        <begin position="1"/>
        <end position="350"/>
    </location>
</feature>
<feature type="DNA-binding region" description="OmpR/PhoB-type" evidence="1">
    <location>
        <begin position="69"/>
        <end position="174"/>
    </location>
</feature>
<keyword id="KW-0045">Antibiotic biosynthesis</keyword>
<keyword id="KW-0238">DNA-binding</keyword>
<keyword id="KW-1185">Reference proteome</keyword>
<keyword id="KW-0804">Transcription</keyword>
<keyword id="KW-0805">Transcription regulation</keyword>
<keyword id="KW-0902">Two-component regulatory system</keyword>
<protein>
    <recommendedName>
        <fullName>Transcriptional regulator RedD</fullName>
    </recommendedName>
</protein>
<name>REDD_STRCO</name>
<reference key="1">
    <citation type="journal article" date="1990" name="J. Bacteriol.">
        <title>Nucleotide sequence and transcriptional analysis of the redD locus of Streptomyces coelicolor A3(2).</title>
        <authorList>
            <person name="Narva K.E."/>
            <person name="Feitelson J.S."/>
        </authorList>
    </citation>
    <scope>NUCLEOTIDE SEQUENCE [GENOMIC DNA]</scope>
    <source>
        <strain>A3(2) / NRRL B-16638</strain>
    </source>
</reference>
<reference key="2">
    <citation type="journal article" date="2002" name="Nature">
        <title>Complete genome sequence of the model actinomycete Streptomyces coelicolor A3(2).</title>
        <authorList>
            <person name="Bentley S.D."/>
            <person name="Chater K.F."/>
            <person name="Cerdeno-Tarraga A.-M."/>
            <person name="Challis G.L."/>
            <person name="Thomson N.R."/>
            <person name="James K.D."/>
            <person name="Harris D.E."/>
            <person name="Quail M.A."/>
            <person name="Kieser H."/>
            <person name="Harper D."/>
            <person name="Bateman A."/>
            <person name="Brown S."/>
            <person name="Chandra G."/>
            <person name="Chen C.W."/>
            <person name="Collins M."/>
            <person name="Cronin A."/>
            <person name="Fraser A."/>
            <person name="Goble A."/>
            <person name="Hidalgo J."/>
            <person name="Hornsby T."/>
            <person name="Howarth S."/>
            <person name="Huang C.-H."/>
            <person name="Kieser T."/>
            <person name="Larke L."/>
            <person name="Murphy L.D."/>
            <person name="Oliver K."/>
            <person name="O'Neil S."/>
            <person name="Rabbinowitsch E."/>
            <person name="Rajandream M.A."/>
            <person name="Rutherford K.M."/>
            <person name="Rutter S."/>
            <person name="Seeger K."/>
            <person name="Saunders D."/>
            <person name="Sharp S."/>
            <person name="Squares R."/>
            <person name="Squares S."/>
            <person name="Taylor K."/>
            <person name="Warren T."/>
            <person name="Wietzorrek A."/>
            <person name="Woodward J.R."/>
            <person name="Barrell B.G."/>
            <person name="Parkhill J."/>
            <person name="Hopwood D.A."/>
        </authorList>
    </citation>
    <scope>NUCLEOTIDE SEQUENCE [LARGE SCALE GENOMIC DNA]</scope>
    <source>
        <strain>ATCC BAA-471 / A3(2) / M145</strain>
    </source>
</reference>
<sequence length="350" mass="37796">MTGGGVLATMDPVRKLVRSQPKIGRHPVAAGQDGRDRHPIRSWECGERARTARTGRTVGRAADPSDHGPSLYNFGGCVEINILGPVSIDTSHSGGGIRAGKVRTLVATLAIDAGRAVSLADLVDELWGATPPDNVLNALQAHAARARKVLNERACPERAGGILRSVLGGYLLEIDPQCVDGNRFLRLVSQGAALLPADPTRAVELLETGLRLWRGPALIDAGEGRRCRGAAALFEERRLTALEDLISAMFLRGGEAQAIAMLQQLVAQYPLRERFCELLMVGLYRVGRQGDALESYRLARKRLDDELGVQPGALLRRRHAEILAQDPVLKVPSALWREPYAPADTSLLSA</sequence>
<proteinExistence type="inferred from homology"/>
<evidence type="ECO:0000255" key="1">
    <source>
        <dbReference type="PROSITE-ProRule" id="PRU01091"/>
    </source>
</evidence>
<evidence type="ECO:0000305" key="2"/>
<gene>
    <name type="primary">redD</name>
    <name type="ordered locus">SCO5877</name>
    <name type="ORF">SC2E9.18</name>
</gene>